<name>RS4_PSEPW</name>
<reference key="1">
    <citation type="submission" date="2008-02" db="EMBL/GenBank/DDBJ databases">
        <title>Complete sequence of Pseudomonas putida W619.</title>
        <authorList>
            <person name="Copeland A."/>
            <person name="Lucas S."/>
            <person name="Lapidus A."/>
            <person name="Barry K."/>
            <person name="Detter J.C."/>
            <person name="Glavina del Rio T."/>
            <person name="Dalin E."/>
            <person name="Tice H."/>
            <person name="Pitluck S."/>
            <person name="Chain P."/>
            <person name="Malfatti S."/>
            <person name="Shin M."/>
            <person name="Vergez L."/>
            <person name="Schmutz J."/>
            <person name="Larimer F."/>
            <person name="Land M."/>
            <person name="Hauser L."/>
            <person name="Kyrpides N."/>
            <person name="Kim E."/>
            <person name="Taghavi S."/>
            <person name="Vangronsveld D."/>
            <person name="van der Lelie D."/>
            <person name="Richardson P."/>
        </authorList>
    </citation>
    <scope>NUCLEOTIDE SEQUENCE [LARGE SCALE GENOMIC DNA]</scope>
    <source>
        <strain>W619</strain>
    </source>
</reference>
<proteinExistence type="inferred from homology"/>
<accession>B1JAI8</accession>
<evidence type="ECO:0000255" key="1">
    <source>
        <dbReference type="HAMAP-Rule" id="MF_01306"/>
    </source>
</evidence>
<evidence type="ECO:0000305" key="2"/>
<feature type="chain" id="PRO_1000140778" description="Small ribosomal subunit protein uS4">
    <location>
        <begin position="1"/>
        <end position="206"/>
    </location>
</feature>
<feature type="domain" description="S4 RNA-binding" evidence="1">
    <location>
        <begin position="96"/>
        <end position="156"/>
    </location>
</feature>
<dbReference type="EMBL" id="CP000949">
    <property type="protein sequence ID" value="ACA75201.1"/>
    <property type="molecule type" value="Genomic_DNA"/>
</dbReference>
<dbReference type="SMR" id="B1JAI8"/>
<dbReference type="STRING" id="390235.PputW619_4725"/>
<dbReference type="KEGG" id="ppw:PputW619_4725"/>
<dbReference type="eggNOG" id="COG0522">
    <property type="taxonomic scope" value="Bacteria"/>
</dbReference>
<dbReference type="HOGENOM" id="CLU_092403_0_2_6"/>
<dbReference type="OrthoDB" id="9803672at2"/>
<dbReference type="GO" id="GO:0015935">
    <property type="term" value="C:small ribosomal subunit"/>
    <property type="evidence" value="ECO:0007669"/>
    <property type="project" value="InterPro"/>
</dbReference>
<dbReference type="GO" id="GO:0019843">
    <property type="term" value="F:rRNA binding"/>
    <property type="evidence" value="ECO:0007669"/>
    <property type="project" value="UniProtKB-UniRule"/>
</dbReference>
<dbReference type="GO" id="GO:0003735">
    <property type="term" value="F:structural constituent of ribosome"/>
    <property type="evidence" value="ECO:0007669"/>
    <property type="project" value="InterPro"/>
</dbReference>
<dbReference type="GO" id="GO:0042274">
    <property type="term" value="P:ribosomal small subunit biogenesis"/>
    <property type="evidence" value="ECO:0007669"/>
    <property type="project" value="TreeGrafter"/>
</dbReference>
<dbReference type="GO" id="GO:0006412">
    <property type="term" value="P:translation"/>
    <property type="evidence" value="ECO:0007669"/>
    <property type="project" value="UniProtKB-UniRule"/>
</dbReference>
<dbReference type="CDD" id="cd00165">
    <property type="entry name" value="S4"/>
    <property type="match status" value="1"/>
</dbReference>
<dbReference type="FunFam" id="1.10.1050.10:FF:000001">
    <property type="entry name" value="30S ribosomal protein S4"/>
    <property type="match status" value="1"/>
</dbReference>
<dbReference type="FunFam" id="3.10.290.10:FF:000001">
    <property type="entry name" value="30S ribosomal protein S4"/>
    <property type="match status" value="1"/>
</dbReference>
<dbReference type="Gene3D" id="1.10.1050.10">
    <property type="entry name" value="Ribosomal Protein S4 Delta 41, Chain A, domain 1"/>
    <property type="match status" value="1"/>
</dbReference>
<dbReference type="Gene3D" id="3.10.290.10">
    <property type="entry name" value="RNA-binding S4 domain"/>
    <property type="match status" value="1"/>
</dbReference>
<dbReference type="HAMAP" id="MF_01306_B">
    <property type="entry name" value="Ribosomal_uS4_B"/>
    <property type="match status" value="1"/>
</dbReference>
<dbReference type="InterPro" id="IPR022801">
    <property type="entry name" value="Ribosomal_uS4"/>
</dbReference>
<dbReference type="InterPro" id="IPR005709">
    <property type="entry name" value="Ribosomal_uS4_bac-type"/>
</dbReference>
<dbReference type="InterPro" id="IPR018079">
    <property type="entry name" value="Ribosomal_uS4_CS"/>
</dbReference>
<dbReference type="InterPro" id="IPR001912">
    <property type="entry name" value="Ribosomal_uS4_N"/>
</dbReference>
<dbReference type="InterPro" id="IPR002942">
    <property type="entry name" value="S4_RNA-bd"/>
</dbReference>
<dbReference type="InterPro" id="IPR036986">
    <property type="entry name" value="S4_RNA-bd_sf"/>
</dbReference>
<dbReference type="NCBIfam" id="NF003717">
    <property type="entry name" value="PRK05327.1"/>
    <property type="match status" value="1"/>
</dbReference>
<dbReference type="NCBIfam" id="TIGR01017">
    <property type="entry name" value="rpsD_bact"/>
    <property type="match status" value="1"/>
</dbReference>
<dbReference type="PANTHER" id="PTHR11831">
    <property type="entry name" value="30S 40S RIBOSOMAL PROTEIN"/>
    <property type="match status" value="1"/>
</dbReference>
<dbReference type="PANTHER" id="PTHR11831:SF4">
    <property type="entry name" value="SMALL RIBOSOMAL SUBUNIT PROTEIN US4M"/>
    <property type="match status" value="1"/>
</dbReference>
<dbReference type="Pfam" id="PF00163">
    <property type="entry name" value="Ribosomal_S4"/>
    <property type="match status" value="1"/>
</dbReference>
<dbReference type="Pfam" id="PF01479">
    <property type="entry name" value="S4"/>
    <property type="match status" value="1"/>
</dbReference>
<dbReference type="SMART" id="SM01390">
    <property type="entry name" value="Ribosomal_S4"/>
    <property type="match status" value="1"/>
</dbReference>
<dbReference type="SMART" id="SM00363">
    <property type="entry name" value="S4"/>
    <property type="match status" value="1"/>
</dbReference>
<dbReference type="SUPFAM" id="SSF55174">
    <property type="entry name" value="Alpha-L RNA-binding motif"/>
    <property type="match status" value="1"/>
</dbReference>
<dbReference type="PROSITE" id="PS00632">
    <property type="entry name" value="RIBOSOMAL_S4"/>
    <property type="match status" value="1"/>
</dbReference>
<dbReference type="PROSITE" id="PS50889">
    <property type="entry name" value="S4"/>
    <property type="match status" value="1"/>
</dbReference>
<keyword id="KW-0687">Ribonucleoprotein</keyword>
<keyword id="KW-0689">Ribosomal protein</keyword>
<keyword id="KW-0694">RNA-binding</keyword>
<keyword id="KW-0699">rRNA-binding</keyword>
<comment type="function">
    <text evidence="1">One of the primary rRNA binding proteins, it binds directly to 16S rRNA where it nucleates assembly of the body of the 30S subunit.</text>
</comment>
<comment type="function">
    <text evidence="1">With S5 and S12 plays an important role in translational accuracy.</text>
</comment>
<comment type="subunit">
    <text evidence="1">Part of the 30S ribosomal subunit. Contacts protein S5. The interaction surface between S4 and S5 is involved in control of translational fidelity.</text>
</comment>
<comment type="similarity">
    <text evidence="1">Belongs to the universal ribosomal protein uS4 family.</text>
</comment>
<gene>
    <name evidence="1" type="primary">rpsD</name>
    <name type="ordered locus">PputW619_4725</name>
</gene>
<organism>
    <name type="scientific">Pseudomonas putida (strain W619)</name>
    <dbReference type="NCBI Taxonomy" id="390235"/>
    <lineage>
        <taxon>Bacteria</taxon>
        <taxon>Pseudomonadati</taxon>
        <taxon>Pseudomonadota</taxon>
        <taxon>Gammaproteobacteria</taxon>
        <taxon>Pseudomonadales</taxon>
        <taxon>Pseudomonadaceae</taxon>
        <taxon>Pseudomonas</taxon>
    </lineage>
</organism>
<sequence length="206" mass="23073">MARYIGPKCKLSRREGTDLFLKSGVRALESKCNIEAAPGIHGQRRGRQSDYGTQLREKQKVRRIYGVLERQFRGYYQAAASKKGATGENLLQLLECRLDNVVYRMGFGSTRSESRQLVSHKAISVNGKTVNIPSYQVRPGDVVAVREKSSNQLRIVQALELCAQRGRVEWVDVDSAKKSGVFKNVPARGDLSADINENLIVELYSK</sequence>
<protein>
    <recommendedName>
        <fullName evidence="1">Small ribosomal subunit protein uS4</fullName>
    </recommendedName>
    <alternativeName>
        <fullName evidence="2">30S ribosomal protein S4</fullName>
    </alternativeName>
</protein>